<protein>
    <recommendedName>
        <fullName evidence="1">DnaA initiator-associating protein DiaA</fullName>
    </recommendedName>
</protein>
<dbReference type="EMBL" id="CP000305">
    <property type="protein sequence ID" value="ABG19760.1"/>
    <property type="molecule type" value="Genomic_DNA"/>
</dbReference>
<dbReference type="EMBL" id="ACNQ01000019">
    <property type="protein sequence ID" value="EEO74309.1"/>
    <property type="molecule type" value="Genomic_DNA"/>
</dbReference>
<dbReference type="RefSeq" id="WP_002210146.1">
    <property type="nucleotide sequence ID" value="NZ_ACNQ01000019.1"/>
</dbReference>
<dbReference type="SMR" id="Q1CE20"/>
<dbReference type="GeneID" id="57975165"/>
<dbReference type="KEGG" id="ypn:YPN_3433"/>
<dbReference type="HOGENOM" id="CLU_080999_3_1_6"/>
<dbReference type="Proteomes" id="UP000008936">
    <property type="component" value="Chromosome"/>
</dbReference>
<dbReference type="GO" id="GO:0097367">
    <property type="term" value="F:carbohydrate derivative binding"/>
    <property type="evidence" value="ECO:0007669"/>
    <property type="project" value="InterPro"/>
</dbReference>
<dbReference type="GO" id="GO:1901135">
    <property type="term" value="P:carbohydrate derivative metabolic process"/>
    <property type="evidence" value="ECO:0007669"/>
    <property type="project" value="InterPro"/>
</dbReference>
<dbReference type="GO" id="GO:0006260">
    <property type="term" value="P:DNA replication"/>
    <property type="evidence" value="ECO:0007669"/>
    <property type="project" value="UniProtKB-UniRule"/>
</dbReference>
<dbReference type="CDD" id="cd05006">
    <property type="entry name" value="SIS_GmhA"/>
    <property type="match status" value="1"/>
</dbReference>
<dbReference type="FunFam" id="3.40.50.10490:FF:000006">
    <property type="entry name" value="DnaA initiator-associating protein DiaA"/>
    <property type="match status" value="1"/>
</dbReference>
<dbReference type="Gene3D" id="3.40.50.10490">
    <property type="entry name" value="Glucose-6-phosphate isomerase like protein, domain 1"/>
    <property type="match status" value="1"/>
</dbReference>
<dbReference type="HAMAP" id="MF_01157">
    <property type="entry name" value="SIS_DiaA"/>
    <property type="match status" value="1"/>
</dbReference>
<dbReference type="InterPro" id="IPR023070">
    <property type="entry name" value="DiaA"/>
</dbReference>
<dbReference type="InterPro" id="IPR035461">
    <property type="entry name" value="GmhA/DiaA"/>
</dbReference>
<dbReference type="InterPro" id="IPR001347">
    <property type="entry name" value="SIS_dom"/>
</dbReference>
<dbReference type="InterPro" id="IPR046348">
    <property type="entry name" value="SIS_dom_sf"/>
</dbReference>
<dbReference type="InterPro" id="IPR050099">
    <property type="entry name" value="SIS_GmhA/DiaA_subfam"/>
</dbReference>
<dbReference type="NCBIfam" id="NF008138">
    <property type="entry name" value="PRK10886.1"/>
    <property type="match status" value="1"/>
</dbReference>
<dbReference type="PANTHER" id="PTHR30390:SF6">
    <property type="entry name" value="DNAA INITIATOR-ASSOCIATING PROTEIN DIAA"/>
    <property type="match status" value="1"/>
</dbReference>
<dbReference type="PANTHER" id="PTHR30390">
    <property type="entry name" value="SEDOHEPTULOSE 7-PHOSPHATE ISOMERASE / DNAA INITIATOR-ASSOCIATING FACTOR FOR REPLICATION INITIATION"/>
    <property type="match status" value="1"/>
</dbReference>
<dbReference type="Pfam" id="PF13580">
    <property type="entry name" value="SIS_2"/>
    <property type="match status" value="1"/>
</dbReference>
<dbReference type="SUPFAM" id="SSF53697">
    <property type="entry name" value="SIS domain"/>
    <property type="match status" value="1"/>
</dbReference>
<dbReference type="PROSITE" id="PS51464">
    <property type="entry name" value="SIS"/>
    <property type="match status" value="1"/>
</dbReference>
<comment type="function">
    <text evidence="1">Required for the timely initiation of chromosomal replication via direct interactions with the DnaA initiator protein.</text>
</comment>
<comment type="subunit">
    <text evidence="1">Homotetramer; dimer of dimers.</text>
</comment>
<comment type="similarity">
    <text evidence="1">Belongs to the SIS family. DiaA subfamily.</text>
</comment>
<proteinExistence type="inferred from homology"/>
<gene>
    <name evidence="1" type="primary">diaA</name>
    <name type="ordered locus">YPN_3433</name>
    <name type="ORF">YP516_3903</name>
</gene>
<sequence>MLERIKGCFTESIQTQIAAAEALPDAISCAAMALVQSLLNGNKILCCGNGTSAANAQHFAASMINRFETERPSLPAIALNADNVVLTAITNDRLHDEVYAKQVRALGQAGDVLLAISTRGNSRDIVKAVEAAVTRDMTIVALTGYDGGELAGLLGQLDVEIRIPSHRGARVQELHMLTVNCLCDLIDNTLFPHQND</sequence>
<evidence type="ECO:0000255" key="1">
    <source>
        <dbReference type="HAMAP-Rule" id="MF_01157"/>
    </source>
</evidence>
<feature type="chain" id="PRO_1000065556" description="DnaA initiator-associating protein DiaA">
    <location>
        <begin position="1"/>
        <end position="196"/>
    </location>
</feature>
<feature type="domain" description="SIS" evidence="1">
    <location>
        <begin position="34"/>
        <end position="196"/>
    </location>
</feature>
<organism>
    <name type="scientific">Yersinia pestis bv. Antiqua (strain Nepal516)</name>
    <dbReference type="NCBI Taxonomy" id="377628"/>
    <lineage>
        <taxon>Bacteria</taxon>
        <taxon>Pseudomonadati</taxon>
        <taxon>Pseudomonadota</taxon>
        <taxon>Gammaproteobacteria</taxon>
        <taxon>Enterobacterales</taxon>
        <taxon>Yersiniaceae</taxon>
        <taxon>Yersinia</taxon>
    </lineage>
</organism>
<keyword id="KW-0235">DNA replication</keyword>
<reference key="1">
    <citation type="journal article" date="2006" name="J. Bacteriol.">
        <title>Complete genome sequence of Yersinia pestis strains Antiqua and Nepal516: evidence of gene reduction in an emerging pathogen.</title>
        <authorList>
            <person name="Chain P.S.G."/>
            <person name="Hu P."/>
            <person name="Malfatti S.A."/>
            <person name="Radnedge L."/>
            <person name="Larimer F."/>
            <person name="Vergez L.M."/>
            <person name="Worsham P."/>
            <person name="Chu M.C."/>
            <person name="Andersen G.L."/>
        </authorList>
    </citation>
    <scope>NUCLEOTIDE SEQUENCE [LARGE SCALE GENOMIC DNA]</scope>
    <source>
        <strain>Nepal516</strain>
    </source>
</reference>
<reference key="2">
    <citation type="submission" date="2009-04" db="EMBL/GenBank/DDBJ databases">
        <title>Yersinia pestis Nepal516A whole genome shotgun sequencing project.</title>
        <authorList>
            <person name="Plunkett G. III"/>
            <person name="Anderson B.D."/>
            <person name="Baumler D.J."/>
            <person name="Burland V."/>
            <person name="Cabot E.L."/>
            <person name="Glasner J.D."/>
            <person name="Mau B."/>
            <person name="Neeno-Eckwall E."/>
            <person name="Perna N.T."/>
            <person name="Munk A.C."/>
            <person name="Tapia R."/>
            <person name="Green L.D."/>
            <person name="Rogers Y.C."/>
            <person name="Detter J.C."/>
            <person name="Bruce D.C."/>
            <person name="Brettin T.S."/>
        </authorList>
    </citation>
    <scope>NUCLEOTIDE SEQUENCE [LARGE SCALE GENOMIC DNA]</scope>
    <source>
        <strain>Nepal516</strain>
    </source>
</reference>
<accession>Q1CE20</accession>
<accession>D1Q1A6</accession>
<name>DIAA_YERPN</name>